<proteinExistence type="inferred from homology"/>
<evidence type="ECO:0000255" key="1">
    <source>
        <dbReference type="HAMAP-Rule" id="MF_01804"/>
    </source>
</evidence>
<reference key="1">
    <citation type="journal article" date="2002" name="Lancet">
        <title>Genome and virulence determinants of high virulence community-acquired MRSA.</title>
        <authorList>
            <person name="Baba T."/>
            <person name="Takeuchi F."/>
            <person name="Kuroda M."/>
            <person name="Yuzawa H."/>
            <person name="Aoki K."/>
            <person name="Oguchi A."/>
            <person name="Nagai Y."/>
            <person name="Iwama N."/>
            <person name="Asano K."/>
            <person name="Naimi T."/>
            <person name="Kuroda H."/>
            <person name="Cui L."/>
            <person name="Yamamoto K."/>
            <person name="Hiramatsu K."/>
        </authorList>
    </citation>
    <scope>NUCLEOTIDE SEQUENCE [LARGE SCALE GENOMIC DNA]</scope>
    <source>
        <strain>MW2</strain>
    </source>
</reference>
<protein>
    <recommendedName>
        <fullName evidence="1">Segregation and condensation protein B</fullName>
    </recommendedName>
</protein>
<accession>Q8NWF2</accession>
<feature type="chain" id="PRO_0000211150" description="Segregation and condensation protein B">
    <location>
        <begin position="1"/>
        <end position="180"/>
    </location>
</feature>
<gene>
    <name evidence="1" type="primary">scpB</name>
    <name type="ordered locus">MW1448</name>
</gene>
<organism>
    <name type="scientific">Staphylococcus aureus (strain MW2)</name>
    <dbReference type="NCBI Taxonomy" id="196620"/>
    <lineage>
        <taxon>Bacteria</taxon>
        <taxon>Bacillati</taxon>
        <taxon>Bacillota</taxon>
        <taxon>Bacilli</taxon>
        <taxon>Bacillales</taxon>
        <taxon>Staphylococcaceae</taxon>
        <taxon>Staphylococcus</taxon>
    </lineage>
</organism>
<comment type="function">
    <text evidence="1">Participates in chromosomal partition during cell division. May act via the formation of a condensin-like complex containing Smc and ScpA that pull DNA away from mid-cell into both cell halves.</text>
</comment>
<comment type="subunit">
    <text evidence="1">Homodimer. Homodimerization may be required to stabilize the binding of ScpA to the Smc head domains. Component of a cohesin-like complex composed of ScpA, ScpB and the Smc homodimer, in which ScpA and ScpB bind to the head domain of Smc. The presence of the three proteins is required for the association of the complex with DNA.</text>
</comment>
<comment type="subcellular location">
    <subcellularLocation>
        <location evidence="1">Cytoplasm</location>
    </subcellularLocation>
    <text evidence="1">Associated with two foci at the outer edges of the nucleoid region in young cells, and at four foci within both cell halves in older cells.</text>
</comment>
<comment type="similarity">
    <text evidence="1">Belongs to the ScpB family.</text>
</comment>
<sequence>MDNHGILESLLFTAGDEGLDEKQLLEILDMSKNQLVELIENYSSHGLMIQRFGTTYVLTTKKEAATYIEQLIEQKSQMKLSQAAMEVLSIIAYNQPLSRSDIELIRSINSDGAVKTLIAKGLVEAKVVNEQRSQQLITTDLFLNVFGISNIEDLPTTEEDDEEMDAFFSNLVNQKGENND</sequence>
<keyword id="KW-0131">Cell cycle</keyword>
<keyword id="KW-0132">Cell division</keyword>
<keyword id="KW-0159">Chromosome partition</keyword>
<keyword id="KW-0963">Cytoplasm</keyword>
<dbReference type="EMBL" id="BA000033">
    <property type="protein sequence ID" value="BAB95313.1"/>
    <property type="molecule type" value="Genomic_DNA"/>
</dbReference>
<dbReference type="RefSeq" id="WP_000368657.1">
    <property type="nucleotide sequence ID" value="NC_003923.1"/>
</dbReference>
<dbReference type="SMR" id="Q8NWF2"/>
<dbReference type="KEGG" id="sam:MW1448"/>
<dbReference type="HOGENOM" id="CLU_045647_5_3_9"/>
<dbReference type="GO" id="GO:0005737">
    <property type="term" value="C:cytoplasm"/>
    <property type="evidence" value="ECO:0007669"/>
    <property type="project" value="UniProtKB-SubCell"/>
</dbReference>
<dbReference type="GO" id="GO:0051301">
    <property type="term" value="P:cell division"/>
    <property type="evidence" value="ECO:0007669"/>
    <property type="project" value="UniProtKB-KW"/>
</dbReference>
<dbReference type="GO" id="GO:0051304">
    <property type="term" value="P:chromosome separation"/>
    <property type="evidence" value="ECO:0007669"/>
    <property type="project" value="InterPro"/>
</dbReference>
<dbReference type="GO" id="GO:0006260">
    <property type="term" value="P:DNA replication"/>
    <property type="evidence" value="ECO:0007669"/>
    <property type="project" value="UniProtKB-UniRule"/>
</dbReference>
<dbReference type="Gene3D" id="1.10.10.10">
    <property type="entry name" value="Winged helix-like DNA-binding domain superfamily/Winged helix DNA-binding domain"/>
    <property type="match status" value="2"/>
</dbReference>
<dbReference type="HAMAP" id="MF_01804">
    <property type="entry name" value="ScpB"/>
    <property type="match status" value="1"/>
</dbReference>
<dbReference type="InterPro" id="IPR005234">
    <property type="entry name" value="ScpB_csome_segregation"/>
</dbReference>
<dbReference type="InterPro" id="IPR036388">
    <property type="entry name" value="WH-like_DNA-bd_sf"/>
</dbReference>
<dbReference type="InterPro" id="IPR036390">
    <property type="entry name" value="WH_DNA-bd_sf"/>
</dbReference>
<dbReference type="NCBIfam" id="TIGR00281">
    <property type="entry name" value="SMC-Scp complex subunit ScpB"/>
    <property type="match status" value="1"/>
</dbReference>
<dbReference type="PANTHER" id="PTHR34298">
    <property type="entry name" value="SEGREGATION AND CONDENSATION PROTEIN B"/>
    <property type="match status" value="1"/>
</dbReference>
<dbReference type="PANTHER" id="PTHR34298:SF2">
    <property type="entry name" value="SEGREGATION AND CONDENSATION PROTEIN B"/>
    <property type="match status" value="1"/>
</dbReference>
<dbReference type="Pfam" id="PF04079">
    <property type="entry name" value="SMC_ScpB"/>
    <property type="match status" value="1"/>
</dbReference>
<dbReference type="PIRSF" id="PIRSF019345">
    <property type="entry name" value="ScpB"/>
    <property type="match status" value="1"/>
</dbReference>
<dbReference type="SUPFAM" id="SSF46785">
    <property type="entry name" value="Winged helix' DNA-binding domain"/>
    <property type="match status" value="2"/>
</dbReference>
<name>SCPB_STAAW</name>